<organism>
    <name type="scientific">Bos taurus</name>
    <name type="common">Bovine</name>
    <dbReference type="NCBI Taxonomy" id="9913"/>
    <lineage>
        <taxon>Eukaryota</taxon>
        <taxon>Metazoa</taxon>
        <taxon>Chordata</taxon>
        <taxon>Craniata</taxon>
        <taxon>Vertebrata</taxon>
        <taxon>Euteleostomi</taxon>
        <taxon>Mammalia</taxon>
        <taxon>Eutheria</taxon>
        <taxon>Laurasiatheria</taxon>
        <taxon>Artiodactyla</taxon>
        <taxon>Ruminantia</taxon>
        <taxon>Pecora</taxon>
        <taxon>Bovidae</taxon>
        <taxon>Bovinae</taxon>
        <taxon>Bos</taxon>
    </lineage>
</organism>
<name>CYC2_BOVIN</name>
<gene>
    <name type="primary">CYCT</name>
</gene>
<feature type="chain" id="PRO_0000266018" description="Cytochrome c 2">
    <location>
        <begin position="1"/>
        <end position="105"/>
    </location>
</feature>
<feature type="binding site" description="covalent" evidence="2">
    <location>
        <position position="15"/>
    </location>
    <ligand>
        <name>heme c</name>
        <dbReference type="ChEBI" id="CHEBI:61717"/>
    </ligand>
</feature>
<feature type="binding site" description="covalent" evidence="2">
    <location>
        <position position="18"/>
    </location>
    <ligand>
        <name>heme c</name>
        <dbReference type="ChEBI" id="CHEBI:61717"/>
    </ligand>
</feature>
<feature type="binding site" description="axial binding residue" evidence="2">
    <location>
        <position position="19"/>
    </location>
    <ligand>
        <name>heme c</name>
        <dbReference type="ChEBI" id="CHEBI:61717"/>
    </ligand>
    <ligandPart>
        <name>Fe</name>
        <dbReference type="ChEBI" id="CHEBI:18248"/>
    </ligandPart>
</feature>
<feature type="binding site" description="axial binding residue" evidence="2">
    <location>
        <position position="81"/>
    </location>
    <ligand>
        <name>heme c</name>
        <dbReference type="ChEBI" id="CHEBI:61717"/>
    </ligand>
    <ligandPart>
        <name>Fe</name>
        <dbReference type="ChEBI" id="CHEBI:18248"/>
    </ligandPart>
</feature>
<evidence type="ECO:0000250" key="1"/>
<evidence type="ECO:0000255" key="2">
    <source>
        <dbReference type="PROSITE-ProRule" id="PRU00433"/>
    </source>
</evidence>
<evidence type="ECO:0000305" key="3"/>
<comment type="function">
    <text evidence="1">Electron carrier protein. The oxidized form of the cytochrome c heme group can accept an electron from the heme group of the cytochrome c1 subunit of cytochrome reductase. Cytochrome c then transfers this electron to the cytochrome oxidase complex, the final protein carrier in the mitochondrial electron-transport chain (By similarity).</text>
</comment>
<comment type="function">
    <text evidence="1">Plays a role in apoptosis. Suppression of the anti-apoptotic members or activation of the pro-apoptotic members of the Bcl-2 family leads to altered mitochondrial membrane permeability resulting in release of cytochrome c into the cytosol. Binding of cytochrome c to Apaf-1 triggers the activation of caspase-9, which then accelerates apoptosis by activating other caspases (By similarity).</text>
</comment>
<comment type="subcellular location">
    <subcellularLocation>
        <location evidence="1">Mitochondrion intermembrane space</location>
    </subcellularLocation>
    <text evidence="1">Loosely associated with the inner membrane.</text>
</comment>
<comment type="PTM">
    <text evidence="1">Binds 1 heme c group covalently per subunit.</text>
</comment>
<comment type="PTM">
    <text evidence="1">Phosphorylation at Tyr-49 and Tyr-98 both reduce by half the turnover in the reaction with cytochrome c oxidase, down-regulating mitochondrial respiration.</text>
</comment>
<comment type="similarity">
    <text evidence="3">Belongs to the cytochrome c family.</text>
</comment>
<comment type="online information" name="Protein Spotlight">
    <link uri="https://www.proteinspotlight.org/back_issues/076"/>
    <text>Life shuttle - Issue 76 of November 2006</text>
</comment>
<sequence length="105" mass="11740">MADAEAGKKIFIQKCAQCHTVEKGGKHKTGPNLWGLFGRKTGQAPGFSYTEANKNKGIIWGEQTLMEYLENPKKYIPGTKMIFAGLKKKSEREDLIEYLKQATSS</sequence>
<reference key="1">
    <citation type="submission" date="2005-08" db="EMBL/GenBank/DDBJ databases">
        <authorList>
            <consortium name="NIH - Mammalian Gene Collection (MGC) project"/>
        </authorList>
    </citation>
    <scope>NUCLEOTIDE SEQUENCE [LARGE SCALE MRNA]</scope>
    <source>
        <strain>Crossbred X Angus</strain>
        <tissue>Liver</tissue>
    </source>
</reference>
<dbReference type="EMBL" id="BC102714">
    <property type="protein sequence ID" value="AAI02715.1"/>
    <property type="molecule type" value="mRNA"/>
</dbReference>
<dbReference type="RefSeq" id="NP_001071431.1">
    <property type="nucleotide sequence ID" value="NM_001077963.2"/>
</dbReference>
<dbReference type="RefSeq" id="XP_059733111.1">
    <property type="nucleotide sequence ID" value="XM_059877128.1"/>
</dbReference>
<dbReference type="SMR" id="Q3SZT9"/>
<dbReference type="FunCoup" id="Q3SZT9">
    <property type="interactions" value="851"/>
</dbReference>
<dbReference type="STRING" id="9913.ENSBTAP00000031831"/>
<dbReference type="PaxDb" id="9913-ENSBTAP00000031831"/>
<dbReference type="Ensembl" id="ENSBTAT00000031885.4">
    <property type="protein sequence ID" value="ENSBTAP00000031831.2"/>
    <property type="gene ID" value="ENSBTAG00000039522.3"/>
</dbReference>
<dbReference type="GeneID" id="781996"/>
<dbReference type="KEGG" id="bta:781996"/>
<dbReference type="CTD" id="13067"/>
<dbReference type="VEuPathDB" id="HostDB:ENSBTAG00000039522"/>
<dbReference type="VGNC" id="VGNC:108924">
    <property type="gene designation" value="CYCT"/>
</dbReference>
<dbReference type="eggNOG" id="KOG3453">
    <property type="taxonomic scope" value="Eukaryota"/>
</dbReference>
<dbReference type="GeneTree" id="ENSGT00940000157883"/>
<dbReference type="HOGENOM" id="CLU_060944_3_0_1"/>
<dbReference type="InParanoid" id="Q3SZT9"/>
<dbReference type="OMA" id="NKGVIWG"/>
<dbReference type="OrthoDB" id="449280at2759"/>
<dbReference type="TreeFam" id="TF300226"/>
<dbReference type="Proteomes" id="UP000009136">
    <property type="component" value="Chromosome 2"/>
</dbReference>
<dbReference type="Bgee" id="ENSBTAG00000039522">
    <property type="expression patterns" value="Expressed in semen and 31 other cell types or tissues"/>
</dbReference>
<dbReference type="GO" id="GO:0005758">
    <property type="term" value="C:mitochondrial intermembrane space"/>
    <property type="evidence" value="ECO:0000318"/>
    <property type="project" value="GO_Central"/>
</dbReference>
<dbReference type="GO" id="GO:0009055">
    <property type="term" value="F:electron transfer activity"/>
    <property type="evidence" value="ECO:0000318"/>
    <property type="project" value="GO_Central"/>
</dbReference>
<dbReference type="GO" id="GO:0020037">
    <property type="term" value="F:heme binding"/>
    <property type="evidence" value="ECO:0007669"/>
    <property type="project" value="Ensembl"/>
</dbReference>
<dbReference type="GO" id="GO:0046872">
    <property type="term" value="F:metal ion binding"/>
    <property type="evidence" value="ECO:0007669"/>
    <property type="project" value="UniProtKB-KW"/>
</dbReference>
<dbReference type="GO" id="GO:0006915">
    <property type="term" value="P:apoptotic process"/>
    <property type="evidence" value="ECO:0007669"/>
    <property type="project" value="UniProtKB-KW"/>
</dbReference>
<dbReference type="GO" id="GO:0042743">
    <property type="term" value="P:hydrogen peroxide metabolic process"/>
    <property type="evidence" value="ECO:0007669"/>
    <property type="project" value="Ensembl"/>
</dbReference>
<dbReference type="GO" id="GO:0006123">
    <property type="term" value="P:mitochondrial electron transport, cytochrome c to oxygen"/>
    <property type="evidence" value="ECO:0000318"/>
    <property type="project" value="GO_Central"/>
</dbReference>
<dbReference type="GO" id="GO:0006122">
    <property type="term" value="P:mitochondrial electron transport, ubiquinol to cytochrome c"/>
    <property type="evidence" value="ECO:0000318"/>
    <property type="project" value="GO_Central"/>
</dbReference>
<dbReference type="GO" id="GO:2001244">
    <property type="term" value="P:positive regulation of intrinsic apoptotic signaling pathway"/>
    <property type="evidence" value="ECO:0007669"/>
    <property type="project" value="Ensembl"/>
</dbReference>
<dbReference type="FunFam" id="1.10.760.10:FF:000008">
    <property type="entry name" value="Cytochrome c"/>
    <property type="match status" value="1"/>
</dbReference>
<dbReference type="Gene3D" id="1.10.760.10">
    <property type="entry name" value="Cytochrome c-like domain"/>
    <property type="match status" value="1"/>
</dbReference>
<dbReference type="InterPro" id="IPR009056">
    <property type="entry name" value="Cyt_c-like_dom"/>
</dbReference>
<dbReference type="InterPro" id="IPR036909">
    <property type="entry name" value="Cyt_c-like_dom_sf"/>
</dbReference>
<dbReference type="InterPro" id="IPR002327">
    <property type="entry name" value="Cyt_c_1A/1B"/>
</dbReference>
<dbReference type="PANTHER" id="PTHR11961">
    <property type="entry name" value="CYTOCHROME C"/>
    <property type="match status" value="1"/>
</dbReference>
<dbReference type="Pfam" id="PF00034">
    <property type="entry name" value="Cytochrom_C"/>
    <property type="match status" value="1"/>
</dbReference>
<dbReference type="PRINTS" id="PR00604">
    <property type="entry name" value="CYTCHRMECIAB"/>
</dbReference>
<dbReference type="SUPFAM" id="SSF46626">
    <property type="entry name" value="Cytochrome c"/>
    <property type="match status" value="1"/>
</dbReference>
<dbReference type="PROSITE" id="PS51007">
    <property type="entry name" value="CYTC"/>
    <property type="match status" value="1"/>
</dbReference>
<keyword id="KW-0053">Apoptosis</keyword>
<keyword id="KW-0249">Electron transport</keyword>
<keyword id="KW-0349">Heme</keyword>
<keyword id="KW-0408">Iron</keyword>
<keyword id="KW-0479">Metal-binding</keyword>
<keyword id="KW-0496">Mitochondrion</keyword>
<keyword id="KW-0597">Phosphoprotein</keyword>
<keyword id="KW-1185">Reference proteome</keyword>
<keyword id="KW-0679">Respiratory chain</keyword>
<keyword id="KW-0813">Transport</keyword>
<protein>
    <recommendedName>
        <fullName>Cytochrome c 2</fullName>
    </recommendedName>
</protein>
<accession>Q3SZT9</accession>
<proteinExistence type="inferred from homology"/>